<evidence type="ECO:0000250" key="1"/>
<evidence type="ECO:0000255" key="2">
    <source>
        <dbReference type="PROSITE-ProRule" id="PRU00182"/>
    </source>
</evidence>
<evidence type="ECO:0000305" key="3"/>
<feature type="chain" id="PRO_0000294475" description="Uncharacterized RNA pseudouridine synthase RBE_0321">
    <location>
        <begin position="1"/>
        <end position="229"/>
    </location>
</feature>
<feature type="domain" description="S4 RNA-binding" evidence="2">
    <location>
        <begin position="2"/>
        <end position="69"/>
    </location>
</feature>
<feature type="active site" description="Nucleophile" evidence="1">
    <location>
        <position position="102"/>
    </location>
</feature>
<accession>Q1RJR2</accession>
<gene>
    <name type="ordered locus">RBE_0321</name>
</gene>
<keyword id="KW-0413">Isomerase</keyword>
<keyword id="KW-0694">RNA-binding</keyword>
<name>Y321_RICBR</name>
<organism>
    <name type="scientific">Rickettsia bellii (strain RML369-C)</name>
    <dbReference type="NCBI Taxonomy" id="336407"/>
    <lineage>
        <taxon>Bacteria</taxon>
        <taxon>Pseudomonadati</taxon>
        <taxon>Pseudomonadota</taxon>
        <taxon>Alphaproteobacteria</taxon>
        <taxon>Rickettsiales</taxon>
        <taxon>Rickettsiaceae</taxon>
        <taxon>Rickettsieae</taxon>
        <taxon>Rickettsia</taxon>
        <taxon>belli group</taxon>
    </lineage>
</organism>
<reference key="1">
    <citation type="journal article" date="2006" name="PLoS Genet.">
        <title>Genome sequence of Rickettsia bellii illuminates the role of amoebae in gene exchanges between intracellular pathogens.</title>
        <authorList>
            <person name="Ogata H."/>
            <person name="La Scola B."/>
            <person name="Audic S."/>
            <person name="Renesto P."/>
            <person name="Blanc G."/>
            <person name="Robert C."/>
            <person name="Fournier P.-E."/>
            <person name="Claverie J.-M."/>
            <person name="Raoult D."/>
        </authorList>
    </citation>
    <scope>NUCLEOTIDE SEQUENCE [LARGE SCALE GENOMIC DNA]</scope>
    <source>
        <strain>RML369-C</strain>
    </source>
</reference>
<sequence length="229" mass="26222">MQRLAKLISNAGICSRRDAEKLILDGQVKVNGIIVTSPATNVDTDNQVEVSGSLITSSQKSRLWIYYKPVGLITTHKDPLSRKTVFEQLTGLPRVISIGRLDLNSEGLLLLTNNGDLARQFELPSSKLKRVYHVRAYGNPDPLLKSNYKNLEIDGIFYNPQSIKLLRKNSTNSWLEVILFEGKNREIRRIFEHFGLKVNKLIRTEYGDFKLDNLKPNEYREVTKKLYKC</sequence>
<proteinExistence type="inferred from homology"/>
<comment type="catalytic activity">
    <reaction>
        <text>a uridine in RNA = a pseudouridine in RNA</text>
        <dbReference type="Rhea" id="RHEA:48348"/>
        <dbReference type="Rhea" id="RHEA-COMP:12068"/>
        <dbReference type="Rhea" id="RHEA-COMP:12069"/>
        <dbReference type="ChEBI" id="CHEBI:65314"/>
        <dbReference type="ChEBI" id="CHEBI:65315"/>
    </reaction>
</comment>
<comment type="similarity">
    <text evidence="3">Belongs to the pseudouridine synthase RsuA family.</text>
</comment>
<dbReference type="EC" id="5.4.99.-"/>
<dbReference type="EMBL" id="CP000087">
    <property type="protein sequence ID" value="ABE04402.1"/>
    <property type="molecule type" value="Genomic_DNA"/>
</dbReference>
<dbReference type="RefSeq" id="WP_011477013.1">
    <property type="nucleotide sequence ID" value="NC_007940.1"/>
</dbReference>
<dbReference type="SMR" id="Q1RJR2"/>
<dbReference type="KEGG" id="rbe:RBE_0321"/>
<dbReference type="eggNOG" id="COG1187">
    <property type="taxonomic scope" value="Bacteria"/>
</dbReference>
<dbReference type="HOGENOM" id="CLU_024979_1_0_5"/>
<dbReference type="OrthoDB" id="9807213at2"/>
<dbReference type="Proteomes" id="UP000001951">
    <property type="component" value="Chromosome"/>
</dbReference>
<dbReference type="GO" id="GO:0003723">
    <property type="term" value="F:RNA binding"/>
    <property type="evidence" value="ECO:0007669"/>
    <property type="project" value="UniProtKB-KW"/>
</dbReference>
<dbReference type="GO" id="GO:0120159">
    <property type="term" value="F:rRNA pseudouridine synthase activity"/>
    <property type="evidence" value="ECO:0007669"/>
    <property type="project" value="UniProtKB-ARBA"/>
</dbReference>
<dbReference type="GO" id="GO:0000455">
    <property type="term" value="P:enzyme-directed rRNA pseudouridine synthesis"/>
    <property type="evidence" value="ECO:0007669"/>
    <property type="project" value="UniProtKB-ARBA"/>
</dbReference>
<dbReference type="CDD" id="cd00165">
    <property type="entry name" value="S4"/>
    <property type="match status" value="1"/>
</dbReference>
<dbReference type="FunFam" id="3.10.290.10:FF:000003">
    <property type="entry name" value="Pseudouridine synthase"/>
    <property type="match status" value="1"/>
</dbReference>
<dbReference type="Gene3D" id="3.30.70.1560">
    <property type="entry name" value="Alpha-L RNA-binding motif"/>
    <property type="match status" value="1"/>
</dbReference>
<dbReference type="Gene3D" id="3.30.70.580">
    <property type="entry name" value="Pseudouridine synthase I, catalytic domain, N-terminal subdomain"/>
    <property type="match status" value="1"/>
</dbReference>
<dbReference type="Gene3D" id="3.10.290.10">
    <property type="entry name" value="RNA-binding S4 domain"/>
    <property type="match status" value="1"/>
</dbReference>
<dbReference type="InterPro" id="IPR042092">
    <property type="entry name" value="PsdUridine_s_RsuA/RluB/E/F_cat"/>
</dbReference>
<dbReference type="InterPro" id="IPR020103">
    <property type="entry name" value="PsdUridine_synth_cat_dom_sf"/>
</dbReference>
<dbReference type="InterPro" id="IPR006145">
    <property type="entry name" value="PsdUridine_synth_RsuA/RluA"/>
</dbReference>
<dbReference type="InterPro" id="IPR000748">
    <property type="entry name" value="PsdUridine_synth_RsuA/RluB/E/F"/>
</dbReference>
<dbReference type="InterPro" id="IPR018496">
    <property type="entry name" value="PsdUridine_synth_RsuA/RluB_CS"/>
</dbReference>
<dbReference type="InterPro" id="IPR050343">
    <property type="entry name" value="RsuA_PseudoU_synthase"/>
</dbReference>
<dbReference type="InterPro" id="IPR002942">
    <property type="entry name" value="S4_RNA-bd"/>
</dbReference>
<dbReference type="InterPro" id="IPR036986">
    <property type="entry name" value="S4_RNA-bd_sf"/>
</dbReference>
<dbReference type="InterPro" id="IPR020094">
    <property type="entry name" value="TruA/RsuA/RluB/E/F_N"/>
</dbReference>
<dbReference type="NCBIfam" id="TIGR00093">
    <property type="entry name" value="pseudouridine synthase"/>
    <property type="match status" value="1"/>
</dbReference>
<dbReference type="PANTHER" id="PTHR47683">
    <property type="entry name" value="PSEUDOURIDINE SYNTHASE FAMILY PROTEIN-RELATED"/>
    <property type="match status" value="1"/>
</dbReference>
<dbReference type="PANTHER" id="PTHR47683:SF3">
    <property type="entry name" value="RIBOSOMAL LARGE SUBUNIT PSEUDOURIDINE SYNTHASE B"/>
    <property type="match status" value="1"/>
</dbReference>
<dbReference type="Pfam" id="PF00849">
    <property type="entry name" value="PseudoU_synth_2"/>
    <property type="match status" value="1"/>
</dbReference>
<dbReference type="Pfam" id="PF01479">
    <property type="entry name" value="S4"/>
    <property type="match status" value="1"/>
</dbReference>
<dbReference type="SMART" id="SM00363">
    <property type="entry name" value="S4"/>
    <property type="match status" value="1"/>
</dbReference>
<dbReference type="SUPFAM" id="SSF55174">
    <property type="entry name" value="Alpha-L RNA-binding motif"/>
    <property type="match status" value="1"/>
</dbReference>
<dbReference type="SUPFAM" id="SSF55120">
    <property type="entry name" value="Pseudouridine synthase"/>
    <property type="match status" value="1"/>
</dbReference>
<dbReference type="PROSITE" id="PS01149">
    <property type="entry name" value="PSI_RSU"/>
    <property type="match status" value="1"/>
</dbReference>
<dbReference type="PROSITE" id="PS50889">
    <property type="entry name" value="S4"/>
    <property type="match status" value="1"/>
</dbReference>
<protein>
    <recommendedName>
        <fullName>Uncharacterized RNA pseudouridine synthase RBE_0321</fullName>
        <ecNumber>5.4.99.-</ecNumber>
    </recommendedName>
    <alternativeName>
        <fullName>RNA pseudouridylate synthase</fullName>
    </alternativeName>
    <alternativeName>
        <fullName>RNA-uridine isomerase</fullName>
    </alternativeName>
</protein>